<protein>
    <recommendedName>
        <fullName>Uncharacterized protein Rv2197c</fullName>
    </recommendedName>
</protein>
<sequence>MVSRYSAYRRGPDVISPDVIDRILVGACAAVWLVFTGVSVAAAVALMDLGRGFHEMAGNPHTTWVLYAVIVVSALVIVGAIPVLLRARRMAEAEPATRPTGASVRGGRSIGSGHPAKRAVAESAPVQHADAFEVAAEWSSEAVDRIWLRGTVVLTSAIGIALIAVAAATYLMAVGHDGPSWISYGLAGVVTAGMPVIEWLYARQLRRVVAPQSS</sequence>
<accession>P9WLI9</accession>
<accession>L0T8W8</accession>
<accession>Q10389</accession>
<proteinExistence type="evidence at protein level"/>
<dbReference type="EMBL" id="AL123456">
    <property type="protein sequence ID" value="CCP44974.1"/>
    <property type="molecule type" value="Genomic_DNA"/>
</dbReference>
<dbReference type="PIR" id="F70784">
    <property type="entry name" value="F70784"/>
</dbReference>
<dbReference type="RefSeq" id="NP_216713.1">
    <property type="nucleotide sequence ID" value="NC_000962.3"/>
</dbReference>
<dbReference type="RefSeq" id="WP_003899213.1">
    <property type="nucleotide sequence ID" value="NZ_NVQJ01000008.1"/>
</dbReference>
<dbReference type="STRING" id="83332.Rv2197c"/>
<dbReference type="PaxDb" id="83332-Rv2197c"/>
<dbReference type="DNASU" id="887213"/>
<dbReference type="GeneID" id="887213"/>
<dbReference type="KEGG" id="mtu:Rv2197c"/>
<dbReference type="KEGG" id="mtv:RVBD_2197c"/>
<dbReference type="TubercuList" id="Rv2197c"/>
<dbReference type="eggNOG" id="ENOG50316TG">
    <property type="taxonomic scope" value="Bacteria"/>
</dbReference>
<dbReference type="InParanoid" id="P9WLI9"/>
<dbReference type="OrthoDB" id="4640608at2"/>
<dbReference type="Proteomes" id="UP000001584">
    <property type="component" value="Chromosome"/>
</dbReference>
<dbReference type="GO" id="GO:0005886">
    <property type="term" value="C:plasma membrane"/>
    <property type="evidence" value="ECO:0007669"/>
    <property type="project" value="UniProtKB-SubCell"/>
</dbReference>
<dbReference type="InterPro" id="IPR024381">
    <property type="entry name" value="DUF2561"/>
</dbReference>
<dbReference type="Pfam" id="PF10812">
    <property type="entry name" value="DUF2561"/>
    <property type="match status" value="1"/>
</dbReference>
<name>Y2197_MYCTU</name>
<reference key="1">
    <citation type="journal article" date="1998" name="Nature">
        <title>Deciphering the biology of Mycobacterium tuberculosis from the complete genome sequence.</title>
        <authorList>
            <person name="Cole S.T."/>
            <person name="Brosch R."/>
            <person name="Parkhill J."/>
            <person name="Garnier T."/>
            <person name="Churcher C.M."/>
            <person name="Harris D.E."/>
            <person name="Gordon S.V."/>
            <person name="Eiglmeier K."/>
            <person name="Gas S."/>
            <person name="Barry C.E. III"/>
            <person name="Tekaia F."/>
            <person name="Badcock K."/>
            <person name="Basham D."/>
            <person name="Brown D."/>
            <person name="Chillingworth T."/>
            <person name="Connor R."/>
            <person name="Davies R.M."/>
            <person name="Devlin K."/>
            <person name="Feltwell T."/>
            <person name="Gentles S."/>
            <person name="Hamlin N."/>
            <person name="Holroyd S."/>
            <person name="Hornsby T."/>
            <person name="Jagels K."/>
            <person name="Krogh A."/>
            <person name="McLean J."/>
            <person name="Moule S."/>
            <person name="Murphy L.D."/>
            <person name="Oliver S."/>
            <person name="Osborne J."/>
            <person name="Quail M.A."/>
            <person name="Rajandream M.A."/>
            <person name="Rogers J."/>
            <person name="Rutter S."/>
            <person name="Seeger K."/>
            <person name="Skelton S."/>
            <person name="Squares S."/>
            <person name="Squares R."/>
            <person name="Sulston J.E."/>
            <person name="Taylor K."/>
            <person name="Whitehead S."/>
            <person name="Barrell B.G."/>
        </authorList>
    </citation>
    <scope>NUCLEOTIDE SEQUENCE [LARGE SCALE GENOMIC DNA]</scope>
    <source>
        <strain>ATCC 25618 / H37Rv</strain>
    </source>
</reference>
<reference key="2">
    <citation type="journal article" date="2011" name="Mol. Cell. Proteomics">
        <title>Proteogenomic analysis of Mycobacterium tuberculosis by high resolution mass spectrometry.</title>
        <authorList>
            <person name="Kelkar D.S."/>
            <person name="Kumar D."/>
            <person name="Kumar P."/>
            <person name="Balakrishnan L."/>
            <person name="Muthusamy B."/>
            <person name="Yadav A.K."/>
            <person name="Shrivastava P."/>
            <person name="Marimuthu A."/>
            <person name="Anand S."/>
            <person name="Sundaram H."/>
            <person name="Kingsbury R."/>
            <person name="Harsha H.C."/>
            <person name="Nair B."/>
            <person name="Prasad T.S."/>
            <person name="Chauhan D.S."/>
            <person name="Katoch K."/>
            <person name="Katoch V.M."/>
            <person name="Kumar P."/>
            <person name="Chaerkady R."/>
            <person name="Ramachandran S."/>
            <person name="Dash D."/>
            <person name="Pandey A."/>
        </authorList>
    </citation>
    <scope>IDENTIFICATION BY MASS SPECTROMETRY [LARGE SCALE ANALYSIS]</scope>
    <source>
        <strain>ATCC 25618 / H37Rv</strain>
    </source>
</reference>
<evidence type="ECO:0000255" key="1"/>
<evidence type="ECO:0000256" key="2">
    <source>
        <dbReference type="SAM" id="MobiDB-lite"/>
    </source>
</evidence>
<evidence type="ECO:0000305" key="3"/>
<gene>
    <name type="ordered locus">Rv2197c</name>
    <name type="ORF">MTCY190.08c</name>
</gene>
<organism>
    <name type="scientific">Mycobacterium tuberculosis (strain ATCC 25618 / H37Rv)</name>
    <dbReference type="NCBI Taxonomy" id="83332"/>
    <lineage>
        <taxon>Bacteria</taxon>
        <taxon>Bacillati</taxon>
        <taxon>Actinomycetota</taxon>
        <taxon>Actinomycetes</taxon>
        <taxon>Mycobacteriales</taxon>
        <taxon>Mycobacteriaceae</taxon>
        <taxon>Mycobacterium</taxon>
        <taxon>Mycobacterium tuberculosis complex</taxon>
    </lineage>
</organism>
<feature type="chain" id="PRO_0000103971" description="Uncharacterized protein Rv2197c">
    <location>
        <begin position="1"/>
        <end position="214"/>
    </location>
</feature>
<feature type="transmembrane region" description="Helical" evidence="1">
    <location>
        <begin position="23"/>
        <end position="43"/>
    </location>
</feature>
<feature type="transmembrane region" description="Helical" evidence="1">
    <location>
        <begin position="65"/>
        <end position="85"/>
    </location>
</feature>
<feature type="transmembrane region" description="Helical" evidence="1">
    <location>
        <begin position="152"/>
        <end position="172"/>
    </location>
</feature>
<feature type="transmembrane region" description="Helical" evidence="1">
    <location>
        <begin position="181"/>
        <end position="201"/>
    </location>
</feature>
<feature type="region of interest" description="Disordered" evidence="2">
    <location>
        <begin position="96"/>
        <end position="115"/>
    </location>
</feature>
<comment type="subcellular location">
    <subcellularLocation>
        <location evidence="3">Cell membrane</location>
        <topology evidence="3">Multi-pass membrane protein</topology>
    </subcellularLocation>
</comment>
<keyword id="KW-1003">Cell membrane</keyword>
<keyword id="KW-0472">Membrane</keyword>
<keyword id="KW-1185">Reference proteome</keyword>
<keyword id="KW-0812">Transmembrane</keyword>
<keyword id="KW-1133">Transmembrane helix</keyword>